<comment type="function">
    <text evidence="1">Excises uracil residues from the DNA which can arise as a result of misincorporation of dUMP residues by DNA polymerase or due to deamination of cytosine.</text>
</comment>
<comment type="catalytic activity">
    <reaction>
        <text>Hydrolyzes single-stranded DNA or mismatched double-stranded DNA and polynucleotides, releasing free uracil.</text>
        <dbReference type="EC" id="3.2.2.27"/>
    </reaction>
</comment>
<comment type="subcellular location">
    <subcellularLocation>
        <location evidence="1">Cytoplasm</location>
    </subcellularLocation>
</comment>
<comment type="similarity">
    <text evidence="2">Belongs to the uracil-DNA glycosylase (UDG) superfamily. UNG family.</text>
</comment>
<proteinExistence type="inferred from homology"/>
<evidence type="ECO:0000250" key="1"/>
<evidence type="ECO:0000305" key="2"/>
<keyword id="KW-0963">Cytoplasm</keyword>
<keyword id="KW-0227">DNA damage</keyword>
<keyword id="KW-0234">DNA repair</keyword>
<keyword id="KW-0378">Hydrolase</keyword>
<keyword id="KW-1185">Reference proteome</keyword>
<sequence length="240" mass="27819">MEQLLDQFLSGVLSEWKAFILQEAKQTYFQELLAKLKNVEQELTPKASQVFRPFSFFAPNNTKLIIYGQDPYPNPQHACGLSFASNAPKLPQSLKRMILRLQQEYPELAGQNHWTKQLLEGWAQQGILLLNGVFTTNAFQTNAHRNWGWEQFNCHLLDFLLSQKLYVLLVFLGKQTENFVLKKIGGASQFASLSYPHPSPLTGRKFFDHPDALFKQINQWLKHHNHTPIDWTNGQVQYQF</sequence>
<gene>
    <name type="primary">ung</name>
    <name type="ordered locus">MPN_235</name>
    <name type="ORF">MP596</name>
</gene>
<accession>P75536</accession>
<protein>
    <recommendedName>
        <fullName>Uracil-DNA glycosylase</fullName>
        <shortName>UDG</shortName>
        <ecNumber>3.2.2.27</ecNumber>
    </recommendedName>
</protein>
<dbReference type="EC" id="3.2.2.27"/>
<dbReference type="EMBL" id="U00089">
    <property type="protein sequence ID" value="AAB96244.1"/>
    <property type="molecule type" value="Genomic_DNA"/>
</dbReference>
<dbReference type="PIR" id="S73922">
    <property type="entry name" value="S73922"/>
</dbReference>
<dbReference type="RefSeq" id="NP_109923.1">
    <property type="nucleotide sequence ID" value="NC_000912.1"/>
</dbReference>
<dbReference type="RefSeq" id="WP_010874592.1">
    <property type="nucleotide sequence ID" value="NZ_OU342337.1"/>
</dbReference>
<dbReference type="SMR" id="P75536"/>
<dbReference type="IntAct" id="P75536">
    <property type="interactions" value="2"/>
</dbReference>
<dbReference type="STRING" id="272634.MPN_235"/>
<dbReference type="EnsemblBacteria" id="AAB96244">
    <property type="protein sequence ID" value="AAB96244"/>
    <property type="gene ID" value="MPN_235"/>
</dbReference>
<dbReference type="GeneID" id="66609119"/>
<dbReference type="KEGG" id="mpn:MPN_235"/>
<dbReference type="PATRIC" id="fig|272634.6.peg.254"/>
<dbReference type="HOGENOM" id="CLU_032162_3_2_14"/>
<dbReference type="OrthoDB" id="9804372at2"/>
<dbReference type="BioCyc" id="MPNE272634:G1GJ3-375-MONOMER"/>
<dbReference type="Proteomes" id="UP000000808">
    <property type="component" value="Chromosome"/>
</dbReference>
<dbReference type="GO" id="GO:0005737">
    <property type="term" value="C:cytoplasm"/>
    <property type="evidence" value="ECO:0007669"/>
    <property type="project" value="UniProtKB-SubCell"/>
</dbReference>
<dbReference type="GO" id="GO:0004844">
    <property type="term" value="F:uracil DNA N-glycosylase activity"/>
    <property type="evidence" value="ECO:0007669"/>
    <property type="project" value="UniProtKB-UniRule"/>
</dbReference>
<dbReference type="GO" id="GO:0097510">
    <property type="term" value="P:base-excision repair, AP site formation via deaminated base removal"/>
    <property type="evidence" value="ECO:0007669"/>
    <property type="project" value="TreeGrafter"/>
</dbReference>
<dbReference type="CDD" id="cd10027">
    <property type="entry name" value="UDG-F1-like"/>
    <property type="match status" value="1"/>
</dbReference>
<dbReference type="Gene3D" id="3.40.470.10">
    <property type="entry name" value="Uracil-DNA glycosylase-like domain"/>
    <property type="match status" value="1"/>
</dbReference>
<dbReference type="HAMAP" id="MF_00148">
    <property type="entry name" value="UDG"/>
    <property type="match status" value="1"/>
</dbReference>
<dbReference type="InterPro" id="IPR002043">
    <property type="entry name" value="UDG_fam1"/>
</dbReference>
<dbReference type="InterPro" id="IPR018085">
    <property type="entry name" value="Ura-DNA_Glyclase_AS"/>
</dbReference>
<dbReference type="InterPro" id="IPR005122">
    <property type="entry name" value="Uracil-DNA_glycosylase-like"/>
</dbReference>
<dbReference type="InterPro" id="IPR036895">
    <property type="entry name" value="Uracil-DNA_glycosylase-like_sf"/>
</dbReference>
<dbReference type="NCBIfam" id="NF003592">
    <property type="entry name" value="PRK05254.1-5"/>
    <property type="match status" value="1"/>
</dbReference>
<dbReference type="NCBIfam" id="TIGR00628">
    <property type="entry name" value="ung"/>
    <property type="match status" value="1"/>
</dbReference>
<dbReference type="PANTHER" id="PTHR11264">
    <property type="entry name" value="URACIL-DNA GLYCOSYLASE"/>
    <property type="match status" value="1"/>
</dbReference>
<dbReference type="PANTHER" id="PTHR11264:SF0">
    <property type="entry name" value="URACIL-DNA GLYCOSYLASE"/>
    <property type="match status" value="1"/>
</dbReference>
<dbReference type="Pfam" id="PF03167">
    <property type="entry name" value="UDG"/>
    <property type="match status" value="1"/>
</dbReference>
<dbReference type="SMART" id="SM00986">
    <property type="entry name" value="UDG"/>
    <property type="match status" value="1"/>
</dbReference>
<dbReference type="SMART" id="SM00987">
    <property type="entry name" value="UreE_C"/>
    <property type="match status" value="1"/>
</dbReference>
<dbReference type="SUPFAM" id="SSF52141">
    <property type="entry name" value="Uracil-DNA glycosylase-like"/>
    <property type="match status" value="1"/>
</dbReference>
<dbReference type="PROSITE" id="PS00130">
    <property type="entry name" value="U_DNA_GLYCOSYLASE"/>
    <property type="match status" value="1"/>
</dbReference>
<organism>
    <name type="scientific">Mycoplasma pneumoniae (strain ATCC 29342 / M129 / Subtype 1)</name>
    <name type="common">Mycoplasmoides pneumoniae</name>
    <dbReference type="NCBI Taxonomy" id="272634"/>
    <lineage>
        <taxon>Bacteria</taxon>
        <taxon>Bacillati</taxon>
        <taxon>Mycoplasmatota</taxon>
        <taxon>Mycoplasmoidales</taxon>
        <taxon>Mycoplasmoidaceae</taxon>
        <taxon>Mycoplasmoides</taxon>
    </lineage>
</organism>
<reference key="1">
    <citation type="journal article" date="1996" name="Nucleic Acids Res.">
        <title>Complete sequence analysis of the genome of the bacterium Mycoplasma pneumoniae.</title>
        <authorList>
            <person name="Himmelreich R."/>
            <person name="Hilbert H."/>
            <person name="Plagens H."/>
            <person name="Pirkl E."/>
            <person name="Li B.-C."/>
            <person name="Herrmann R."/>
        </authorList>
    </citation>
    <scope>NUCLEOTIDE SEQUENCE [LARGE SCALE GENOMIC DNA]</scope>
    <source>
        <strain>ATCC 29342 / M129 / Subtype 1</strain>
    </source>
</reference>
<feature type="chain" id="PRO_0000176116" description="Uracil-DNA glycosylase">
    <location>
        <begin position="1"/>
        <end position="240"/>
    </location>
</feature>
<feature type="active site" description="Proton acceptor" evidence="1">
    <location>
        <position position="70"/>
    </location>
</feature>
<name>UNG_MYCPN</name>